<proteinExistence type="evidence at protein level"/>
<keyword id="KW-0007">Acetylation</keyword>
<keyword id="KW-0029">Amino-acid transport</keyword>
<keyword id="KW-0325">Glycoprotein</keyword>
<keyword id="KW-0458">Lysosome</keyword>
<keyword id="KW-0472">Membrane</keyword>
<keyword id="KW-1185">Reference proteome</keyword>
<keyword id="KW-0769">Symport</keyword>
<keyword id="KW-0812">Transmembrane</keyword>
<keyword id="KW-1133">Transmembrane helix</keyword>
<keyword id="KW-0813">Transport</keyword>
<reference key="1">
    <citation type="submission" date="2001-11" db="EMBL/GenBank/DDBJ databases">
        <title>Identification and characterization a mammalian proton dependent small amino acid cotransporter family.</title>
        <authorList>
            <person name="Boll M."/>
            <person name="Foltz M."/>
            <person name="Rubio-Aliaga I."/>
            <person name="Kottra G."/>
            <person name="Daniel H."/>
        </authorList>
    </citation>
    <scope>NUCLEOTIDE SEQUENCE [MRNA]</scope>
    <source>
        <strain>C57BL/6J</strain>
    </source>
</reference>
<reference key="2">
    <citation type="journal article" date="2005" name="Science">
        <title>The transcriptional landscape of the mammalian genome.</title>
        <authorList>
            <person name="Carninci P."/>
            <person name="Kasukawa T."/>
            <person name="Katayama S."/>
            <person name="Gough J."/>
            <person name="Frith M.C."/>
            <person name="Maeda N."/>
            <person name="Oyama R."/>
            <person name="Ravasi T."/>
            <person name="Lenhard B."/>
            <person name="Wells C."/>
            <person name="Kodzius R."/>
            <person name="Shimokawa K."/>
            <person name="Bajic V.B."/>
            <person name="Brenner S.E."/>
            <person name="Batalov S."/>
            <person name="Forrest A.R."/>
            <person name="Zavolan M."/>
            <person name="Davis M.J."/>
            <person name="Wilming L.G."/>
            <person name="Aidinis V."/>
            <person name="Allen J.E."/>
            <person name="Ambesi-Impiombato A."/>
            <person name="Apweiler R."/>
            <person name="Aturaliya R.N."/>
            <person name="Bailey T.L."/>
            <person name="Bansal M."/>
            <person name="Baxter L."/>
            <person name="Beisel K.W."/>
            <person name="Bersano T."/>
            <person name="Bono H."/>
            <person name="Chalk A.M."/>
            <person name="Chiu K.P."/>
            <person name="Choudhary V."/>
            <person name="Christoffels A."/>
            <person name="Clutterbuck D.R."/>
            <person name="Crowe M.L."/>
            <person name="Dalla E."/>
            <person name="Dalrymple B.P."/>
            <person name="de Bono B."/>
            <person name="Della Gatta G."/>
            <person name="di Bernardo D."/>
            <person name="Down T."/>
            <person name="Engstrom P."/>
            <person name="Fagiolini M."/>
            <person name="Faulkner G."/>
            <person name="Fletcher C.F."/>
            <person name="Fukushima T."/>
            <person name="Furuno M."/>
            <person name="Futaki S."/>
            <person name="Gariboldi M."/>
            <person name="Georgii-Hemming P."/>
            <person name="Gingeras T.R."/>
            <person name="Gojobori T."/>
            <person name="Green R.E."/>
            <person name="Gustincich S."/>
            <person name="Harbers M."/>
            <person name="Hayashi Y."/>
            <person name="Hensch T.K."/>
            <person name="Hirokawa N."/>
            <person name="Hill D."/>
            <person name="Huminiecki L."/>
            <person name="Iacono M."/>
            <person name="Ikeo K."/>
            <person name="Iwama A."/>
            <person name="Ishikawa T."/>
            <person name="Jakt M."/>
            <person name="Kanapin A."/>
            <person name="Katoh M."/>
            <person name="Kawasawa Y."/>
            <person name="Kelso J."/>
            <person name="Kitamura H."/>
            <person name="Kitano H."/>
            <person name="Kollias G."/>
            <person name="Krishnan S.P."/>
            <person name="Kruger A."/>
            <person name="Kummerfeld S.K."/>
            <person name="Kurochkin I.V."/>
            <person name="Lareau L.F."/>
            <person name="Lazarevic D."/>
            <person name="Lipovich L."/>
            <person name="Liu J."/>
            <person name="Liuni S."/>
            <person name="McWilliam S."/>
            <person name="Madan Babu M."/>
            <person name="Madera M."/>
            <person name="Marchionni L."/>
            <person name="Matsuda H."/>
            <person name="Matsuzawa S."/>
            <person name="Miki H."/>
            <person name="Mignone F."/>
            <person name="Miyake S."/>
            <person name="Morris K."/>
            <person name="Mottagui-Tabar S."/>
            <person name="Mulder N."/>
            <person name="Nakano N."/>
            <person name="Nakauchi H."/>
            <person name="Ng P."/>
            <person name="Nilsson R."/>
            <person name="Nishiguchi S."/>
            <person name="Nishikawa S."/>
            <person name="Nori F."/>
            <person name="Ohara O."/>
            <person name="Okazaki Y."/>
            <person name="Orlando V."/>
            <person name="Pang K.C."/>
            <person name="Pavan W.J."/>
            <person name="Pavesi G."/>
            <person name="Pesole G."/>
            <person name="Petrovsky N."/>
            <person name="Piazza S."/>
            <person name="Reed J."/>
            <person name="Reid J.F."/>
            <person name="Ring B.Z."/>
            <person name="Ringwald M."/>
            <person name="Rost B."/>
            <person name="Ruan Y."/>
            <person name="Salzberg S.L."/>
            <person name="Sandelin A."/>
            <person name="Schneider C."/>
            <person name="Schoenbach C."/>
            <person name="Sekiguchi K."/>
            <person name="Semple C.A."/>
            <person name="Seno S."/>
            <person name="Sessa L."/>
            <person name="Sheng Y."/>
            <person name="Shibata Y."/>
            <person name="Shimada H."/>
            <person name="Shimada K."/>
            <person name="Silva D."/>
            <person name="Sinclair B."/>
            <person name="Sperling S."/>
            <person name="Stupka E."/>
            <person name="Sugiura K."/>
            <person name="Sultana R."/>
            <person name="Takenaka Y."/>
            <person name="Taki K."/>
            <person name="Tammoja K."/>
            <person name="Tan S.L."/>
            <person name="Tang S."/>
            <person name="Taylor M.S."/>
            <person name="Tegner J."/>
            <person name="Teichmann S.A."/>
            <person name="Ueda H.R."/>
            <person name="van Nimwegen E."/>
            <person name="Verardo R."/>
            <person name="Wei C.L."/>
            <person name="Yagi K."/>
            <person name="Yamanishi H."/>
            <person name="Zabarovsky E."/>
            <person name="Zhu S."/>
            <person name="Zimmer A."/>
            <person name="Hide W."/>
            <person name="Bult C."/>
            <person name="Grimmond S.M."/>
            <person name="Teasdale R.D."/>
            <person name="Liu E.T."/>
            <person name="Brusic V."/>
            <person name="Quackenbush J."/>
            <person name="Wahlestedt C."/>
            <person name="Mattick J.S."/>
            <person name="Hume D.A."/>
            <person name="Kai C."/>
            <person name="Sasaki D."/>
            <person name="Tomaru Y."/>
            <person name="Fukuda S."/>
            <person name="Kanamori-Katayama M."/>
            <person name="Suzuki M."/>
            <person name="Aoki J."/>
            <person name="Arakawa T."/>
            <person name="Iida J."/>
            <person name="Imamura K."/>
            <person name="Itoh M."/>
            <person name="Kato T."/>
            <person name="Kawaji H."/>
            <person name="Kawagashira N."/>
            <person name="Kawashima T."/>
            <person name="Kojima M."/>
            <person name="Kondo S."/>
            <person name="Konno H."/>
            <person name="Nakano K."/>
            <person name="Ninomiya N."/>
            <person name="Nishio T."/>
            <person name="Okada M."/>
            <person name="Plessy C."/>
            <person name="Shibata K."/>
            <person name="Shiraki T."/>
            <person name="Suzuki S."/>
            <person name="Tagami M."/>
            <person name="Waki K."/>
            <person name="Watahiki A."/>
            <person name="Okamura-Oho Y."/>
            <person name="Suzuki H."/>
            <person name="Kawai J."/>
            <person name="Hayashizaki Y."/>
        </authorList>
    </citation>
    <scope>NUCLEOTIDE SEQUENCE [LARGE SCALE MRNA]</scope>
    <source>
        <strain>C57BL/6J</strain>
        <tissue>Medulla oblongata</tissue>
    </source>
</reference>
<reference key="3">
    <citation type="journal article" date="2004" name="Genome Res.">
        <title>The status, quality, and expansion of the NIH full-length cDNA project: the Mammalian Gene Collection (MGC).</title>
        <authorList>
            <consortium name="The MGC Project Team"/>
        </authorList>
    </citation>
    <scope>NUCLEOTIDE SEQUENCE [LARGE SCALE MRNA]</scope>
</reference>
<reference key="4">
    <citation type="journal article" date="2014" name="Brain Res.">
        <title>PAT4 is abundantly expressed in excitatory and inhibitory neurons as well as epithelial cells.</title>
        <authorList>
            <person name="Roshanbin S."/>
            <person name="Hellsten S.V."/>
            <person name="Tafreshiha A."/>
            <person name="Zhu Y."/>
            <person name="Raine A."/>
            <person name="Fredriksson R."/>
        </authorList>
    </citation>
    <scope>TISSUE SPECIFICITY</scope>
    <scope>SUBCELLULAR LOCATION</scope>
</reference>
<organism>
    <name type="scientific">Mus musculus</name>
    <name type="common">Mouse</name>
    <dbReference type="NCBI Taxonomy" id="10090"/>
    <lineage>
        <taxon>Eukaryota</taxon>
        <taxon>Metazoa</taxon>
        <taxon>Chordata</taxon>
        <taxon>Craniata</taxon>
        <taxon>Vertebrata</taxon>
        <taxon>Euteleostomi</taxon>
        <taxon>Mammalia</taxon>
        <taxon>Eutheria</taxon>
        <taxon>Euarchontoglires</taxon>
        <taxon>Glires</taxon>
        <taxon>Rodentia</taxon>
        <taxon>Myomorpha</taxon>
        <taxon>Muroidea</taxon>
        <taxon>Muridae</taxon>
        <taxon>Murinae</taxon>
        <taxon>Mus</taxon>
        <taxon>Mus</taxon>
    </lineage>
</organism>
<sequence>MEAPAPAETAGCEELDMDVMRPLINEQNFDGSSDEEQEQTLVPIQKHYQLDGQHGISFLQTLVHLLKGNIGTGLLGLPLAIKNAGIVLGPISLVFIGIISVHCMHILVRCSHFLCQRFKKSTLGYSDTVSFAMEASPWSCLQRQAAWGRQVVDFFLVITQLGFCSVYIVFLAENVKQVHEGFLGSTPIVSNGSDLSHACERRSVDLRVYMLCFLPLIILLVFIRELKNLFVLSFLANISMAASLVIIYQYVVRNMPDPHNLPIVAGWKKYPLFFGTAVFAFEGIGVVLPLENQMRESKRFPQALNIGMAIVTVLYISLATLGYMCFRDEIKGSITLNLPQDMWLYQSVKILYSFGIFVTYSIQFYVPAEIIIPGVTARLHAKWKRICEFGIRSLLVSITRAGAILIPRLDIVISFVGAVSSSTLALILPPLVEILTFSKDHYNIWMILKNISIAFTGVVGFLLGTYVTVEEIIYPTTAVVAGTSQSPFLNVNSTCITSGL</sequence>
<name>S36A4_MOUSE</name>
<dbReference type="EMBL" id="AF453746">
    <property type="protein sequence ID" value="AAN76274.1"/>
    <property type="molecule type" value="mRNA"/>
</dbReference>
<dbReference type="EMBL" id="AK032074">
    <property type="protein sequence ID" value="BAC27683.1"/>
    <property type="molecule type" value="mRNA"/>
</dbReference>
<dbReference type="EMBL" id="BC115964">
    <property type="protein sequence ID" value="AAI15965.1"/>
    <property type="molecule type" value="mRNA"/>
</dbReference>
<dbReference type="CCDS" id="CCDS22840.1"/>
<dbReference type="RefSeq" id="NP_758493.2">
    <property type="nucleotide sequence ID" value="NM_172289.4"/>
</dbReference>
<dbReference type="FunCoup" id="Q8CH36">
    <property type="interactions" value="480"/>
</dbReference>
<dbReference type="IntAct" id="Q8CH36">
    <property type="interactions" value="1"/>
</dbReference>
<dbReference type="MINT" id="Q8CH36"/>
<dbReference type="STRING" id="10090.ENSMUSP00000057355"/>
<dbReference type="GlyCosmos" id="Q8CH36">
    <property type="glycosylation" value="1 site, No reported glycans"/>
</dbReference>
<dbReference type="GlyGen" id="Q8CH36">
    <property type="glycosylation" value="2 sites, 1 N-linked glycan (1 site)"/>
</dbReference>
<dbReference type="iPTMnet" id="Q8CH36"/>
<dbReference type="PhosphoSitePlus" id="Q8CH36"/>
<dbReference type="SwissPalm" id="Q8CH36"/>
<dbReference type="PaxDb" id="10090-ENSMUSP00000057355"/>
<dbReference type="ProteomicsDB" id="256567"/>
<dbReference type="DNASU" id="234967"/>
<dbReference type="GeneID" id="234967"/>
<dbReference type="KEGG" id="mmu:234967"/>
<dbReference type="UCSC" id="uc009ogg.1">
    <property type="organism name" value="mouse"/>
</dbReference>
<dbReference type="AGR" id="MGI:2442595"/>
<dbReference type="CTD" id="120103"/>
<dbReference type="MGI" id="MGI:2442595">
    <property type="gene designation" value="Slc36a4"/>
</dbReference>
<dbReference type="eggNOG" id="KOG1304">
    <property type="taxonomic scope" value="Eukaryota"/>
</dbReference>
<dbReference type="InParanoid" id="Q8CH36"/>
<dbReference type="OrthoDB" id="1684102at2759"/>
<dbReference type="PhylomeDB" id="Q8CH36"/>
<dbReference type="TreeFam" id="TF314873"/>
<dbReference type="Reactome" id="R-MMU-352230">
    <property type="pathway name" value="Amino acid transport across the plasma membrane"/>
</dbReference>
<dbReference type="Reactome" id="R-MMU-71240">
    <property type="pathway name" value="Tryptophan catabolism"/>
</dbReference>
<dbReference type="BioGRID-ORCS" id="234967">
    <property type="hits" value="5 hits in 77 CRISPR screens"/>
</dbReference>
<dbReference type="ChiTaRS" id="Slc36a4">
    <property type="organism name" value="mouse"/>
</dbReference>
<dbReference type="PRO" id="PR:Q8CH36"/>
<dbReference type="Proteomes" id="UP000000589">
    <property type="component" value="Unplaced"/>
</dbReference>
<dbReference type="RNAct" id="Q8CH36">
    <property type="molecule type" value="protein"/>
</dbReference>
<dbReference type="GO" id="GO:0005765">
    <property type="term" value="C:lysosomal membrane"/>
    <property type="evidence" value="ECO:0000314"/>
    <property type="project" value="UniProtKB"/>
</dbReference>
<dbReference type="GO" id="GO:0015293">
    <property type="term" value="F:symporter activity"/>
    <property type="evidence" value="ECO:0007669"/>
    <property type="project" value="UniProtKB-KW"/>
</dbReference>
<dbReference type="GO" id="GO:0015808">
    <property type="term" value="P:L-alanine transport"/>
    <property type="evidence" value="ECO:0000250"/>
    <property type="project" value="UniProtKB"/>
</dbReference>
<dbReference type="GO" id="GO:0015827">
    <property type="term" value="P:tryptophan transport"/>
    <property type="evidence" value="ECO:0000250"/>
    <property type="project" value="UniProtKB"/>
</dbReference>
<dbReference type="InterPro" id="IPR013057">
    <property type="entry name" value="AA_transpt_TM"/>
</dbReference>
<dbReference type="PANTHER" id="PTHR22950">
    <property type="entry name" value="AMINO ACID TRANSPORTER"/>
    <property type="match status" value="1"/>
</dbReference>
<dbReference type="PANTHER" id="PTHR22950:SF190">
    <property type="entry name" value="NEUTRAL AMINO ACID UNIPORTER 4"/>
    <property type="match status" value="1"/>
</dbReference>
<dbReference type="Pfam" id="PF01490">
    <property type="entry name" value="Aa_trans"/>
    <property type="match status" value="1"/>
</dbReference>
<evidence type="ECO:0000250" key="1">
    <source>
        <dbReference type="UniProtKB" id="Q6YBV0"/>
    </source>
</evidence>
<evidence type="ECO:0000255" key="2"/>
<evidence type="ECO:0000269" key="3">
    <source>
    </source>
</evidence>
<evidence type="ECO:0000305" key="4"/>
<evidence type="ECO:0000312" key="5">
    <source>
        <dbReference type="MGI" id="MGI:2442595"/>
    </source>
</evidence>
<feature type="chain" id="PRO_0000308319" description="Neutral amino acid uniporter 4">
    <location>
        <begin position="1"/>
        <end position="500"/>
    </location>
</feature>
<feature type="transmembrane region" description="Helical" evidence="2">
    <location>
        <begin position="84"/>
        <end position="104"/>
    </location>
</feature>
<feature type="transmembrane region" description="Helical" evidence="2">
    <location>
        <begin position="151"/>
        <end position="171"/>
    </location>
</feature>
<feature type="transmembrane region" description="Helical" evidence="2">
    <location>
        <begin position="203"/>
        <end position="223"/>
    </location>
</feature>
<feature type="transmembrane region" description="Helical" evidence="2">
    <location>
        <begin position="228"/>
        <end position="248"/>
    </location>
</feature>
<feature type="transmembrane region" description="Helical" evidence="2">
    <location>
        <begin position="270"/>
        <end position="290"/>
    </location>
</feature>
<feature type="transmembrane region" description="Helical" evidence="2">
    <location>
        <begin position="306"/>
        <end position="326"/>
    </location>
</feature>
<feature type="transmembrane region" description="Helical" evidence="2">
    <location>
        <begin position="354"/>
        <end position="374"/>
    </location>
</feature>
<feature type="transmembrane region" description="Helical" evidence="2">
    <location>
        <begin position="411"/>
        <end position="431"/>
    </location>
</feature>
<feature type="transmembrane region" description="Helical" evidence="2">
    <location>
        <begin position="444"/>
        <end position="464"/>
    </location>
</feature>
<feature type="modified residue" description="N-acetylmethionine" evidence="1">
    <location>
        <position position="1"/>
    </location>
</feature>
<feature type="glycosylation site" description="N-linked (GlcNAc...) asparagine" evidence="2">
    <location>
        <position position="492"/>
    </location>
</feature>
<feature type="sequence conflict" description="In Ref. 2; BAC27683 and 3; AAI15965." evidence="4" ref="2 3">
    <original>Q</original>
    <variation>S</variation>
    <location>
        <position position="150"/>
    </location>
</feature>
<feature type="sequence conflict" description="In Ref. 2; BAC27683 and 3; AAI15965." evidence="4" ref="2 3">
    <original>R</original>
    <variation>C</variation>
    <location>
        <position position="400"/>
    </location>
</feature>
<comment type="function">
    <text evidence="1">Uniporter that mediates the transport of neutral amino acids like L-tryptophan, proline and alanine. The transport activity is sodium ions-independent, electroneutral and therefore functions via facilitated diffusion.</text>
</comment>
<comment type="catalytic activity">
    <reaction evidence="1">
        <text>L-tryptophan(in) = L-tryptophan(out)</text>
        <dbReference type="Rhea" id="RHEA:70947"/>
        <dbReference type="ChEBI" id="CHEBI:57912"/>
    </reaction>
</comment>
<comment type="catalytic activity">
    <reaction evidence="1">
        <text>L-alanine(in) = L-alanine(out)</text>
        <dbReference type="Rhea" id="RHEA:70719"/>
        <dbReference type="ChEBI" id="CHEBI:57972"/>
    </reaction>
</comment>
<comment type="catalytic activity">
    <reaction evidence="1">
        <text>L-proline(in) = L-proline(out)</text>
        <dbReference type="Rhea" id="RHEA:73811"/>
        <dbReference type="ChEBI" id="CHEBI:60039"/>
    </reaction>
</comment>
<comment type="subunit">
    <text evidence="1">Interacts with CRYBA1.</text>
</comment>
<comment type="subcellular location">
    <subcellularLocation>
        <location evidence="3">Lysosome membrane</location>
        <topology evidence="2">Multi-pass membrane protein</topology>
    </subcellularLocation>
</comment>
<comment type="tissue specificity">
    <text evidence="3">Highly expressed in hippocampus, hypothalamus and piriform cortex (at protein level) (PubMed:24530433). Expressed in epithelial cells and both inhibitory and excitatory neurons (PubMed:24530433).</text>
</comment>
<comment type="similarity">
    <text evidence="4">Belongs to the amino acid/polyamine transporter 2 family.</text>
</comment>
<protein>
    <recommendedName>
        <fullName evidence="4">Neutral amino acid uniporter 4</fullName>
    </recommendedName>
    <alternativeName>
        <fullName>Solute carrier family 36 member 4</fullName>
    </alternativeName>
</protein>
<gene>
    <name evidence="5" type="primary">Slc36a4</name>
    <name type="synonym">Pat4</name>
</gene>
<accession>Q8CH36</accession>
<accession>Q8C077</accession>